<keyword id="KW-0068">Autocatalytic cleavage</keyword>
<keyword id="KW-0106">Calcium</keyword>
<keyword id="KW-1015">Disulfide bond</keyword>
<keyword id="KW-0378">Hydrolase</keyword>
<keyword id="KW-0443">Lipid metabolism</keyword>
<keyword id="KW-0479">Metal-binding</keyword>
<keyword id="KW-1208">Phospholipid metabolism</keyword>
<keyword id="KW-1185">Reference proteome</keyword>
<keyword id="KW-0964">Secreted</keyword>
<keyword id="KW-0732">Signal</keyword>
<keyword id="KW-0865">Zymogen</keyword>
<sequence>MKFLVLAALLTAGTAASGVSPTALWQFRGMIQCTIPGSSPYLEFNGYGCYCGLGGSGTPVDELDRCCQTHDQCYTQAKKLSSCSFLVDNPYTNSYSYSCSGTTVTCSSKNKECEAFICDCDRKAAICFSKRPYNKEYKPISKYC</sequence>
<evidence type="ECO:0000250" key="1"/>
<evidence type="ECO:0000250" key="2">
    <source>
        <dbReference type="UniProtKB" id="P00592"/>
    </source>
</evidence>
<evidence type="ECO:0000250" key="3">
    <source>
        <dbReference type="UniProtKB" id="P00593"/>
    </source>
</evidence>
<evidence type="ECO:0000250" key="4">
    <source>
        <dbReference type="UniProtKB" id="P04054"/>
    </source>
</evidence>
<evidence type="ECO:0000250" key="5">
    <source>
        <dbReference type="UniProtKB" id="P04055"/>
    </source>
</evidence>
<evidence type="ECO:0000250" key="6">
    <source>
        <dbReference type="UniProtKB" id="Q9Z0Y2"/>
    </source>
</evidence>
<evidence type="ECO:0000255" key="7">
    <source>
        <dbReference type="PROSITE-ProRule" id="PRU10035"/>
    </source>
</evidence>
<evidence type="ECO:0000255" key="8">
    <source>
        <dbReference type="PROSITE-ProRule" id="PRU10036"/>
    </source>
</evidence>
<evidence type="ECO:0000305" key="9"/>
<organism>
    <name type="scientific">Oryctolagus cuniculus</name>
    <name type="common">Rabbit</name>
    <dbReference type="NCBI Taxonomy" id="9986"/>
    <lineage>
        <taxon>Eukaryota</taxon>
        <taxon>Metazoa</taxon>
        <taxon>Chordata</taxon>
        <taxon>Craniata</taxon>
        <taxon>Vertebrata</taxon>
        <taxon>Euteleostomi</taxon>
        <taxon>Mammalia</taxon>
        <taxon>Eutheria</taxon>
        <taxon>Euarchontoglires</taxon>
        <taxon>Glires</taxon>
        <taxon>Lagomorpha</taxon>
        <taxon>Leporidae</taxon>
        <taxon>Oryctolagus</taxon>
    </lineage>
</organism>
<feature type="signal peptide" evidence="1">
    <location>
        <begin position="1"/>
        <end position="15"/>
    </location>
</feature>
<feature type="propeptide" id="PRO_0000022745" description="Activation peptide">
    <location>
        <begin position="16"/>
        <end position="22"/>
    </location>
</feature>
<feature type="chain" id="PRO_0000022746" description="Phospholipase A2">
    <location>
        <begin position="23"/>
        <end position="144"/>
    </location>
</feature>
<feature type="active site" evidence="3">
    <location>
        <position position="70"/>
    </location>
</feature>
<feature type="active site" evidence="3">
    <location>
        <position position="121"/>
    </location>
</feature>
<feature type="binding site" evidence="3">
    <location>
        <position position="50"/>
    </location>
    <ligand>
        <name>Ca(2+)</name>
        <dbReference type="ChEBI" id="CHEBI:29108"/>
    </ligand>
</feature>
<feature type="binding site" evidence="3">
    <location>
        <position position="52"/>
    </location>
    <ligand>
        <name>Ca(2+)</name>
        <dbReference type="ChEBI" id="CHEBI:29108"/>
    </ligand>
</feature>
<feature type="binding site" evidence="3">
    <location>
        <position position="54"/>
    </location>
    <ligand>
        <name>Ca(2+)</name>
        <dbReference type="ChEBI" id="CHEBI:29108"/>
    </ligand>
</feature>
<feature type="binding site" evidence="3">
    <location>
        <position position="71"/>
    </location>
    <ligand>
        <name>Ca(2+)</name>
        <dbReference type="ChEBI" id="CHEBI:29108"/>
    </ligand>
</feature>
<feature type="disulfide bond" evidence="3">
    <location>
        <begin position="33"/>
        <end position="99"/>
    </location>
</feature>
<feature type="disulfide bond" evidence="3">
    <location>
        <begin position="49"/>
        <end position="144"/>
    </location>
</feature>
<feature type="disulfide bond" evidence="3">
    <location>
        <begin position="51"/>
        <end position="67"/>
    </location>
</feature>
<feature type="disulfide bond" evidence="3">
    <location>
        <begin position="66"/>
        <end position="127"/>
    </location>
</feature>
<feature type="disulfide bond" evidence="3">
    <location>
        <begin position="73"/>
        <end position="120"/>
    </location>
</feature>
<feature type="disulfide bond" evidence="3">
    <location>
        <begin position="83"/>
        <end position="113"/>
    </location>
</feature>
<feature type="disulfide bond" evidence="3">
    <location>
        <begin position="106"/>
        <end position="118"/>
    </location>
</feature>
<protein>
    <recommendedName>
        <fullName>Phospholipase A2</fullName>
        <ecNumber evidence="4 5">3.1.1.4</ecNumber>
    </recommendedName>
    <alternativeName>
        <fullName>Group IB phospholipase A2</fullName>
    </alternativeName>
    <alternativeName>
        <fullName>Phosphatidylcholine 2-acylhydrolase 1B</fullName>
    </alternativeName>
</protein>
<proteinExistence type="inferred from homology"/>
<name>PA21B_RABIT</name>
<accession>Q7M334</accession>
<dbReference type="EC" id="3.1.1.4" evidence="4 5"/>
<dbReference type="PIR" id="JN0480">
    <property type="entry name" value="JN0480"/>
</dbReference>
<dbReference type="SMR" id="Q7M334"/>
<dbReference type="FunCoup" id="Q7M334">
    <property type="interactions" value="32"/>
</dbReference>
<dbReference type="STRING" id="9986.ENSOCUP00000000957"/>
<dbReference type="PaxDb" id="9986-ENSOCUP00000000957"/>
<dbReference type="eggNOG" id="KOG4087">
    <property type="taxonomic scope" value="Eukaryota"/>
</dbReference>
<dbReference type="InParanoid" id="Q7M334"/>
<dbReference type="Proteomes" id="UP000001811">
    <property type="component" value="Unplaced"/>
</dbReference>
<dbReference type="GO" id="GO:0005576">
    <property type="term" value="C:extracellular region"/>
    <property type="evidence" value="ECO:0007669"/>
    <property type="project" value="UniProtKB-SubCell"/>
</dbReference>
<dbReference type="GO" id="GO:0032052">
    <property type="term" value="F:bile acid binding"/>
    <property type="evidence" value="ECO:0000250"/>
    <property type="project" value="UniProtKB"/>
</dbReference>
<dbReference type="GO" id="GO:0005509">
    <property type="term" value="F:calcium ion binding"/>
    <property type="evidence" value="ECO:0007669"/>
    <property type="project" value="InterPro"/>
</dbReference>
<dbReference type="GO" id="GO:0047498">
    <property type="term" value="F:calcium-dependent phospholipase A2 activity"/>
    <property type="evidence" value="ECO:0000250"/>
    <property type="project" value="UniProtKB"/>
</dbReference>
<dbReference type="GO" id="GO:0005543">
    <property type="term" value="F:phospholipid binding"/>
    <property type="evidence" value="ECO:0007669"/>
    <property type="project" value="TreeGrafter"/>
</dbReference>
<dbReference type="GO" id="GO:0005102">
    <property type="term" value="F:signaling receptor binding"/>
    <property type="evidence" value="ECO:0007669"/>
    <property type="project" value="TreeGrafter"/>
</dbReference>
<dbReference type="GO" id="GO:0050482">
    <property type="term" value="P:arachidonate secretion"/>
    <property type="evidence" value="ECO:0007669"/>
    <property type="project" value="InterPro"/>
</dbReference>
<dbReference type="GO" id="GO:0006633">
    <property type="term" value="P:fatty acid biosynthetic process"/>
    <property type="evidence" value="ECO:0007669"/>
    <property type="project" value="TreeGrafter"/>
</dbReference>
<dbReference type="GO" id="GO:0016042">
    <property type="term" value="P:lipid catabolic process"/>
    <property type="evidence" value="ECO:0007669"/>
    <property type="project" value="InterPro"/>
</dbReference>
<dbReference type="GO" id="GO:0046471">
    <property type="term" value="P:phosphatidylglycerol metabolic process"/>
    <property type="evidence" value="ECO:0000250"/>
    <property type="project" value="UniProtKB"/>
</dbReference>
<dbReference type="GO" id="GO:0048146">
    <property type="term" value="P:positive regulation of fibroblast proliferation"/>
    <property type="evidence" value="ECO:0007669"/>
    <property type="project" value="TreeGrafter"/>
</dbReference>
<dbReference type="GO" id="GO:1904635">
    <property type="term" value="P:positive regulation of podocyte apoptotic process"/>
    <property type="evidence" value="ECO:0000250"/>
    <property type="project" value="UniProtKB"/>
</dbReference>
<dbReference type="CDD" id="cd00125">
    <property type="entry name" value="PLA2c"/>
    <property type="match status" value="1"/>
</dbReference>
<dbReference type="FunFam" id="1.20.90.10:FF:000011">
    <property type="entry name" value="Phospholipase A(2)"/>
    <property type="match status" value="1"/>
</dbReference>
<dbReference type="Gene3D" id="1.20.90.10">
    <property type="entry name" value="Phospholipase A2 domain"/>
    <property type="match status" value="1"/>
</dbReference>
<dbReference type="InterPro" id="IPR001211">
    <property type="entry name" value="PLipase_A2"/>
</dbReference>
<dbReference type="InterPro" id="IPR033112">
    <property type="entry name" value="PLipase_A2_Asp_AS"/>
</dbReference>
<dbReference type="InterPro" id="IPR016090">
    <property type="entry name" value="PLipase_A2_dom"/>
</dbReference>
<dbReference type="InterPro" id="IPR036444">
    <property type="entry name" value="PLipase_A2_dom_sf"/>
</dbReference>
<dbReference type="InterPro" id="IPR033113">
    <property type="entry name" value="PLipase_A2_His_AS"/>
</dbReference>
<dbReference type="PANTHER" id="PTHR11716:SF94">
    <property type="entry name" value="PHOSPHOLIPASE A2"/>
    <property type="match status" value="1"/>
</dbReference>
<dbReference type="PANTHER" id="PTHR11716">
    <property type="entry name" value="PHOSPHOLIPASE A2 FAMILY MEMBER"/>
    <property type="match status" value="1"/>
</dbReference>
<dbReference type="Pfam" id="PF00068">
    <property type="entry name" value="Phospholip_A2_1"/>
    <property type="match status" value="1"/>
</dbReference>
<dbReference type="PRINTS" id="PR00389">
    <property type="entry name" value="PHPHLIPASEA2"/>
</dbReference>
<dbReference type="SMART" id="SM00085">
    <property type="entry name" value="PA2c"/>
    <property type="match status" value="1"/>
</dbReference>
<dbReference type="SUPFAM" id="SSF48619">
    <property type="entry name" value="Phospholipase A2, PLA2"/>
    <property type="match status" value="1"/>
</dbReference>
<dbReference type="PROSITE" id="PS00119">
    <property type="entry name" value="PA2_ASP"/>
    <property type="match status" value="1"/>
</dbReference>
<dbReference type="PROSITE" id="PS00118">
    <property type="entry name" value="PA2_HIS"/>
    <property type="match status" value="1"/>
</dbReference>
<reference key="1">
    <citation type="journal article" date="1993" name="Biochem. Biophys. Res. Commun.">
        <title>Cloning and expression of rabbit pancreatic phospholipase A2.</title>
        <authorList>
            <person name="Kumar V.B."/>
        </authorList>
    </citation>
    <scope>NUCLEOTIDE SEQUENCE</scope>
    <source>
        <tissue>Pancreas</tissue>
    </source>
</reference>
<comment type="function">
    <text evidence="4 5 6">Secretory calcium-dependent phospholipase A2 that primarily targets dietary phospholipids in the intestinal tract. Hydrolyzes the ester bond of the fatty acyl group attached at sn-2 position of phospholipids (phospholipase A2 activity) with preference for phosphatidylethanolamines and phosphatidylglycerols over phosphatidylcholines. May play a role in the biosynthesis of N-acyl ethanolamines that regulate energy metabolism and inflammation in the intestinal tract. Hydrolyzes N-acyl phosphatidylethanolamines to N-acyl lysophosphatidylethanolamines, which are further cleaved by a lysophospholipase D to release N-acyl ethanolamines (By similarity). May act in an autocrine and paracrine manner (By similarity). Has anti-helminth activity in a process regulated by gut microbiota. Upon helminth infection of intestinal epithelia, directly affects phosphatidylethanolamine contents in the membrane of helminth larvae, likely controlling an array of phospholipid-mediated cellular processes such as membrane fusion and cell division while providing for better immune recognition, ultimately reducing larvae integrity and infectivity (By similarity).</text>
</comment>
<comment type="catalytic activity">
    <reaction evidence="4 5 7 8">
        <text>a 1,2-diacyl-sn-glycero-3-phosphocholine + H2O = a 1-acyl-sn-glycero-3-phosphocholine + a fatty acid + H(+)</text>
        <dbReference type="Rhea" id="RHEA:15801"/>
        <dbReference type="ChEBI" id="CHEBI:15377"/>
        <dbReference type="ChEBI" id="CHEBI:15378"/>
        <dbReference type="ChEBI" id="CHEBI:28868"/>
        <dbReference type="ChEBI" id="CHEBI:57643"/>
        <dbReference type="ChEBI" id="CHEBI:58168"/>
        <dbReference type="EC" id="3.1.1.4"/>
    </reaction>
</comment>
<comment type="catalytic activity">
    <reaction evidence="4">
        <text>1,2-ditetradecanoyl-sn-glycero-3-phosphocholine + H2O = 1-tetradecanoyl-sn-glycero-3-phosphocholine + tetradecanoate + H(+)</text>
        <dbReference type="Rhea" id="RHEA:54456"/>
        <dbReference type="ChEBI" id="CHEBI:15377"/>
        <dbReference type="ChEBI" id="CHEBI:15378"/>
        <dbReference type="ChEBI" id="CHEBI:30807"/>
        <dbReference type="ChEBI" id="CHEBI:45240"/>
        <dbReference type="ChEBI" id="CHEBI:64489"/>
    </reaction>
</comment>
<comment type="catalytic activity">
    <reaction evidence="5">
        <text>1,2-dihexadecanoyl-sn-glycero-3-phosphocholine + H2O = 1-hexadecanoyl-sn-glycero-3-phosphocholine + hexadecanoate + H(+)</text>
        <dbReference type="Rhea" id="RHEA:41223"/>
        <dbReference type="ChEBI" id="CHEBI:7896"/>
        <dbReference type="ChEBI" id="CHEBI:15377"/>
        <dbReference type="ChEBI" id="CHEBI:15378"/>
        <dbReference type="ChEBI" id="CHEBI:72998"/>
        <dbReference type="ChEBI" id="CHEBI:72999"/>
    </reaction>
    <physiologicalReaction direction="left-to-right" evidence="5">
        <dbReference type="Rhea" id="RHEA:41224"/>
    </physiologicalReaction>
</comment>
<comment type="catalytic activity">
    <reaction evidence="4">
        <text>1-hexadecanoyl-2-(9Z-octadecenoyl)-sn-glycero-3-phosphocholine + H2O = 1-hexadecanoyl-sn-glycero-3-phosphocholine + (9Z)-octadecenoate + H(+)</text>
        <dbReference type="Rhea" id="RHEA:38779"/>
        <dbReference type="ChEBI" id="CHEBI:15377"/>
        <dbReference type="ChEBI" id="CHEBI:15378"/>
        <dbReference type="ChEBI" id="CHEBI:30823"/>
        <dbReference type="ChEBI" id="CHEBI:72998"/>
        <dbReference type="ChEBI" id="CHEBI:73001"/>
    </reaction>
    <physiologicalReaction direction="left-to-right" evidence="4">
        <dbReference type="Rhea" id="RHEA:38780"/>
    </physiologicalReaction>
</comment>
<comment type="catalytic activity">
    <reaction evidence="5">
        <text>1-hexadecanoyl-2-(5Z,8Z,11Z,14Z-eicosatetraenoyl)-sn-glycero-3-phosphocholine + H2O = 1-hexadecanoyl-sn-glycero-3-phosphocholine + (5Z,8Z,11Z,14Z)-eicosatetraenoate + H(+)</text>
        <dbReference type="Rhea" id="RHEA:40427"/>
        <dbReference type="ChEBI" id="CHEBI:15377"/>
        <dbReference type="ChEBI" id="CHEBI:15378"/>
        <dbReference type="ChEBI" id="CHEBI:32395"/>
        <dbReference type="ChEBI" id="CHEBI:72998"/>
        <dbReference type="ChEBI" id="CHEBI:73003"/>
    </reaction>
    <physiologicalReaction direction="left-to-right" evidence="5">
        <dbReference type="Rhea" id="RHEA:40428"/>
    </physiologicalReaction>
</comment>
<comment type="catalytic activity">
    <reaction evidence="4">
        <text>1-hexadecanoyl-2-(9Z-octadecenoyl)-sn-glycero-3-phospho-(1'-sn-glycerol) + H2O = 1-hexadecanoyl-sn-glycero-3-phospho-(1'-sn-glycerol) + (9Z)-octadecenoate + H(+)</text>
        <dbReference type="Rhea" id="RHEA:40919"/>
        <dbReference type="ChEBI" id="CHEBI:15377"/>
        <dbReference type="ChEBI" id="CHEBI:15378"/>
        <dbReference type="ChEBI" id="CHEBI:30823"/>
        <dbReference type="ChEBI" id="CHEBI:72841"/>
        <dbReference type="ChEBI" id="CHEBI:75158"/>
    </reaction>
    <physiologicalReaction direction="left-to-right" evidence="4">
        <dbReference type="Rhea" id="RHEA:40920"/>
    </physiologicalReaction>
</comment>
<comment type="catalytic activity">
    <reaction evidence="5">
        <text>N-hexadecanoyl-1,2-di-(9Z-octadecenoyl)-sn-glycero-3-phosphoethanolamine + H2O = N-hexadecanoyl-1-(9Z-octadecenoyl)-sn-glycero-3-phosphoethanolamine + (9Z)-octadecenoate + H(+)</text>
        <dbReference type="Rhea" id="RHEA:45424"/>
        <dbReference type="ChEBI" id="CHEBI:15377"/>
        <dbReference type="ChEBI" id="CHEBI:15378"/>
        <dbReference type="ChEBI" id="CHEBI:30823"/>
        <dbReference type="ChEBI" id="CHEBI:78097"/>
        <dbReference type="ChEBI" id="CHEBI:85217"/>
    </reaction>
    <physiologicalReaction direction="left-to-right" evidence="5">
        <dbReference type="Rhea" id="RHEA:45425"/>
    </physiologicalReaction>
</comment>
<comment type="catalytic activity">
    <reaction evidence="5">
        <text>1-hexadecanoyl-2-(9Z,12Z-octadecadienoyl)-sn-glycero-3-phosphoethanolamine + H2O = 1-hexadecanoyl-sn-glycero-3-phosphoethanolamine + (9Z,12Z)-octadecadienoate + H(+)</text>
        <dbReference type="Rhea" id="RHEA:40815"/>
        <dbReference type="ChEBI" id="CHEBI:15377"/>
        <dbReference type="ChEBI" id="CHEBI:15378"/>
        <dbReference type="ChEBI" id="CHEBI:30245"/>
        <dbReference type="ChEBI" id="CHEBI:73004"/>
        <dbReference type="ChEBI" id="CHEBI:73008"/>
    </reaction>
    <physiologicalReaction direction="left-to-right" evidence="5">
        <dbReference type="Rhea" id="RHEA:40816"/>
    </physiologicalReaction>
</comment>
<comment type="catalytic activity">
    <reaction evidence="5">
        <text>N,1-dihexadecanoyl-2-(9Z,12Z-octadecadienoyl)-sn-glycero-3-phosphoethanolamine + H2O = N,1-dihexadecanoyl-sn-glycero-3-phosphoethanolamine + (9Z,12Z)-octadecadienoate + H(+)</text>
        <dbReference type="Rhea" id="RHEA:56424"/>
        <dbReference type="ChEBI" id="CHEBI:15377"/>
        <dbReference type="ChEBI" id="CHEBI:15378"/>
        <dbReference type="ChEBI" id="CHEBI:30245"/>
        <dbReference type="ChEBI" id="CHEBI:85334"/>
        <dbReference type="ChEBI" id="CHEBI:85335"/>
    </reaction>
    <physiologicalReaction direction="left-to-right" evidence="5">
        <dbReference type="Rhea" id="RHEA:56425"/>
    </physiologicalReaction>
</comment>
<comment type="cofactor">
    <cofactor evidence="3">
        <name>Ca(2+)</name>
        <dbReference type="ChEBI" id="CHEBI:29108"/>
    </cofactor>
    <text evidence="3">Binds 1 Ca(2+) ion per subunit.</text>
</comment>
<comment type="subunit">
    <text evidence="2">Monomer or homodimer.</text>
</comment>
<comment type="subcellular location">
    <subcellularLocation>
        <location evidence="4">Secreted</location>
    </subcellularLocation>
    <text evidence="4">Secreted from pancreatic acinar cells in its inactive form.</text>
</comment>
<comment type="PTM">
    <text evidence="4">Activated by trypsin cleavage in the duodenum. Can also be activated by thrombin or autocatalytically.</text>
</comment>
<comment type="similarity">
    <text evidence="9">Belongs to the phospholipase A2 family.</text>
</comment>
<gene>
    <name type="primary">PLA2G1B</name>
</gene>